<feature type="chain" id="PRO_1000062448" description="Protein-export protein SecB">
    <location>
        <begin position="1"/>
        <end position="156"/>
    </location>
</feature>
<organism>
    <name type="scientific">Aeromonas hydrophila subsp. hydrophila (strain ATCC 7966 / DSM 30187 / BCRC 13018 / CCUG 14551 / JCM 1027 / KCTC 2358 / NCIMB 9240 / NCTC 8049)</name>
    <dbReference type="NCBI Taxonomy" id="380703"/>
    <lineage>
        <taxon>Bacteria</taxon>
        <taxon>Pseudomonadati</taxon>
        <taxon>Pseudomonadota</taxon>
        <taxon>Gammaproteobacteria</taxon>
        <taxon>Aeromonadales</taxon>
        <taxon>Aeromonadaceae</taxon>
        <taxon>Aeromonas</taxon>
    </lineage>
</organism>
<keyword id="KW-0143">Chaperone</keyword>
<keyword id="KW-0963">Cytoplasm</keyword>
<keyword id="KW-0653">Protein transport</keyword>
<keyword id="KW-1185">Reference proteome</keyword>
<keyword id="KW-0811">Translocation</keyword>
<keyword id="KW-0813">Transport</keyword>
<name>SECB_AERHH</name>
<accession>A0KF07</accession>
<dbReference type="EMBL" id="CP000462">
    <property type="protein sequence ID" value="ABK37114.1"/>
    <property type="molecule type" value="Genomic_DNA"/>
</dbReference>
<dbReference type="RefSeq" id="WP_011704300.1">
    <property type="nucleotide sequence ID" value="NC_008570.1"/>
</dbReference>
<dbReference type="RefSeq" id="YP_854825.1">
    <property type="nucleotide sequence ID" value="NC_008570.1"/>
</dbReference>
<dbReference type="SMR" id="A0KF07"/>
<dbReference type="STRING" id="380703.AHA_0295"/>
<dbReference type="EnsemblBacteria" id="ABK37114">
    <property type="protein sequence ID" value="ABK37114"/>
    <property type="gene ID" value="AHA_0295"/>
</dbReference>
<dbReference type="GeneID" id="4490453"/>
<dbReference type="KEGG" id="aha:AHA_0295"/>
<dbReference type="PATRIC" id="fig|380703.7.peg.283"/>
<dbReference type="eggNOG" id="COG1952">
    <property type="taxonomic scope" value="Bacteria"/>
</dbReference>
<dbReference type="HOGENOM" id="CLU_111574_1_0_6"/>
<dbReference type="OrthoDB" id="9795145at2"/>
<dbReference type="Proteomes" id="UP000000756">
    <property type="component" value="Chromosome"/>
</dbReference>
<dbReference type="GO" id="GO:0005737">
    <property type="term" value="C:cytoplasm"/>
    <property type="evidence" value="ECO:0007669"/>
    <property type="project" value="UniProtKB-SubCell"/>
</dbReference>
<dbReference type="GO" id="GO:0051082">
    <property type="term" value="F:unfolded protein binding"/>
    <property type="evidence" value="ECO:0007669"/>
    <property type="project" value="InterPro"/>
</dbReference>
<dbReference type="GO" id="GO:0006457">
    <property type="term" value="P:protein folding"/>
    <property type="evidence" value="ECO:0007669"/>
    <property type="project" value="UniProtKB-UniRule"/>
</dbReference>
<dbReference type="GO" id="GO:0051262">
    <property type="term" value="P:protein tetramerization"/>
    <property type="evidence" value="ECO:0007669"/>
    <property type="project" value="InterPro"/>
</dbReference>
<dbReference type="GO" id="GO:0015031">
    <property type="term" value="P:protein transport"/>
    <property type="evidence" value="ECO:0007669"/>
    <property type="project" value="UniProtKB-UniRule"/>
</dbReference>
<dbReference type="Gene3D" id="3.10.420.10">
    <property type="entry name" value="SecB-like"/>
    <property type="match status" value="1"/>
</dbReference>
<dbReference type="HAMAP" id="MF_00821">
    <property type="entry name" value="SecB"/>
    <property type="match status" value="1"/>
</dbReference>
<dbReference type="InterPro" id="IPR003708">
    <property type="entry name" value="SecB"/>
</dbReference>
<dbReference type="InterPro" id="IPR035958">
    <property type="entry name" value="SecB-like_sf"/>
</dbReference>
<dbReference type="NCBIfam" id="NF004393">
    <property type="entry name" value="PRK05751.1-4"/>
    <property type="match status" value="1"/>
</dbReference>
<dbReference type="NCBIfam" id="TIGR00809">
    <property type="entry name" value="secB"/>
    <property type="match status" value="1"/>
</dbReference>
<dbReference type="PANTHER" id="PTHR36918">
    <property type="match status" value="1"/>
</dbReference>
<dbReference type="PANTHER" id="PTHR36918:SF1">
    <property type="entry name" value="PROTEIN-EXPORT PROTEIN SECB"/>
    <property type="match status" value="1"/>
</dbReference>
<dbReference type="Pfam" id="PF02556">
    <property type="entry name" value="SecB"/>
    <property type="match status" value="1"/>
</dbReference>
<dbReference type="PRINTS" id="PR01594">
    <property type="entry name" value="SECBCHAPRONE"/>
</dbReference>
<dbReference type="SUPFAM" id="SSF54611">
    <property type="entry name" value="SecB-like"/>
    <property type="match status" value="1"/>
</dbReference>
<evidence type="ECO:0000255" key="1">
    <source>
        <dbReference type="HAMAP-Rule" id="MF_00821"/>
    </source>
</evidence>
<comment type="function">
    <text evidence="1">One of the proteins required for the normal export of preproteins out of the cell cytoplasm. It is a molecular chaperone that binds to a subset of precursor proteins, maintaining them in a translocation-competent state. It also specifically binds to its receptor SecA.</text>
</comment>
<comment type="subunit">
    <text evidence="1">Homotetramer, a dimer of dimers. One homotetramer interacts with 1 SecA dimer.</text>
</comment>
<comment type="subcellular location">
    <subcellularLocation>
        <location evidence="1">Cytoplasm</location>
    </subcellularLocation>
</comment>
<comment type="similarity">
    <text evidence="1">Belongs to the SecB family.</text>
</comment>
<reference key="1">
    <citation type="journal article" date="2006" name="J. Bacteriol.">
        <title>Genome sequence of Aeromonas hydrophila ATCC 7966T: jack of all trades.</title>
        <authorList>
            <person name="Seshadri R."/>
            <person name="Joseph S.W."/>
            <person name="Chopra A.K."/>
            <person name="Sha J."/>
            <person name="Shaw J."/>
            <person name="Graf J."/>
            <person name="Haft D.H."/>
            <person name="Wu M."/>
            <person name="Ren Q."/>
            <person name="Rosovitz M.J."/>
            <person name="Madupu R."/>
            <person name="Tallon L."/>
            <person name="Kim M."/>
            <person name="Jin S."/>
            <person name="Vuong H."/>
            <person name="Stine O.C."/>
            <person name="Ali A."/>
            <person name="Horneman A.J."/>
            <person name="Heidelberg J.F."/>
        </authorList>
    </citation>
    <scope>NUCLEOTIDE SEQUENCE [LARGE SCALE GENOMIC DNA]</scope>
    <source>
        <strain>ATCC 7966 / DSM 30187 / BCRC 13018 / CCUG 14551 / JCM 1027 / KCTC 2358 / NCIMB 9240 / NCTC 8049</strain>
    </source>
</reference>
<proteinExistence type="inferred from homology"/>
<sequence length="156" mass="17398">MAEEINNQEVQPEFHIQRVYTKDVSFEAPNTPHIFQKEWQPDVKLDMDTKTNILADSVYEVVLTLTVTCKLETETAFLCEVQQAGIFTIGNLPEPQLAHCLAAFCPNILFPYAREAVSNLVSKGSFPQLNLAPVNFDALFAQHMAQAQAQQATAEA</sequence>
<gene>
    <name evidence="1" type="primary">secB</name>
    <name type="ordered locus">AHA_0295</name>
</gene>
<protein>
    <recommendedName>
        <fullName evidence="1">Protein-export protein SecB</fullName>
    </recommendedName>
</protein>